<reference key="1">
    <citation type="journal article" date="2002" name="Nucleic Acids Res.">
        <title>Genome sequence of Shigella flexneri 2a: insights into pathogenicity through comparison with genomes of Escherichia coli K12 and O157.</title>
        <authorList>
            <person name="Jin Q."/>
            <person name="Yuan Z."/>
            <person name="Xu J."/>
            <person name="Wang Y."/>
            <person name="Shen Y."/>
            <person name="Lu W."/>
            <person name="Wang J."/>
            <person name="Liu H."/>
            <person name="Yang J."/>
            <person name="Yang F."/>
            <person name="Zhang X."/>
            <person name="Zhang J."/>
            <person name="Yang G."/>
            <person name="Wu H."/>
            <person name="Qu D."/>
            <person name="Dong J."/>
            <person name="Sun L."/>
            <person name="Xue Y."/>
            <person name="Zhao A."/>
            <person name="Gao Y."/>
            <person name="Zhu J."/>
            <person name="Kan B."/>
            <person name="Ding K."/>
            <person name="Chen S."/>
            <person name="Cheng H."/>
            <person name="Yao Z."/>
            <person name="He B."/>
            <person name="Chen R."/>
            <person name="Ma D."/>
            <person name="Qiang B."/>
            <person name="Wen Y."/>
            <person name="Hou Y."/>
            <person name="Yu J."/>
        </authorList>
    </citation>
    <scope>NUCLEOTIDE SEQUENCE [LARGE SCALE GENOMIC DNA]</scope>
    <source>
        <strain>301 / Serotype 2a</strain>
    </source>
</reference>
<reference key="2">
    <citation type="journal article" date="2003" name="Infect. Immun.">
        <title>Complete genome sequence and comparative genomics of Shigella flexneri serotype 2a strain 2457T.</title>
        <authorList>
            <person name="Wei J."/>
            <person name="Goldberg M.B."/>
            <person name="Burland V."/>
            <person name="Venkatesan M.M."/>
            <person name="Deng W."/>
            <person name="Fournier G."/>
            <person name="Mayhew G.F."/>
            <person name="Plunkett G. III"/>
            <person name="Rose D.J."/>
            <person name="Darling A."/>
            <person name="Mau B."/>
            <person name="Perna N.T."/>
            <person name="Payne S.M."/>
            <person name="Runyen-Janecky L.J."/>
            <person name="Zhou S."/>
            <person name="Schwartz D.C."/>
            <person name="Blattner F.R."/>
        </authorList>
    </citation>
    <scope>NUCLEOTIDE SEQUENCE [LARGE SCALE GENOMIC DNA]</scope>
    <source>
        <strain>ATCC 700930 / 2457T / Serotype 2a</strain>
    </source>
</reference>
<comment type="function">
    <text evidence="1">Involved in the biosynthesis of the siderophore enterobactin (enterochelin), which is a macrocyclic trimeric lactone of N-(2,3-dihydroxybenzoyl)-serine. The serine trilactone serves as a scaffolding for the three catechol functionalities that provide hexadentate coordination for the tightly ligated iron(3+) atoms. EntB is a bifunctional protein that serves as an isochorismate lyase and an aryl carrier protein (ArCP). Catalyzes the conversion of isochorismate to 2,3-dihydro-2,3-dihydroxybenzoate (2,3-diDHB), the precursor of 2,3-dihydroxybenzoate (DHB). In the enterobactin assembly, EntB functions as an aryl carrier protein phosphopantetheinylated near the C terminus by EntD to yield holo-EntB, which is then acylated by EntE with 2,3-dihydroxybenzoyl-AMP to form DHB-holo-EntB. Then this product will serve in the formation of the amide bond between 2,3-dihydroxybenzoate (DHB) and L-serine.</text>
</comment>
<comment type="catalytic activity">
    <reaction evidence="1">
        <text>3 2,3-dihydroxybenzoate + 3 L-serine + 6 ATP = enterobactin + 6 AMP + 6 diphosphate + 4 H(+)</text>
        <dbReference type="Rhea" id="RHEA:30571"/>
        <dbReference type="ChEBI" id="CHEBI:15378"/>
        <dbReference type="ChEBI" id="CHEBI:30616"/>
        <dbReference type="ChEBI" id="CHEBI:33019"/>
        <dbReference type="ChEBI" id="CHEBI:33384"/>
        <dbReference type="ChEBI" id="CHEBI:36654"/>
        <dbReference type="ChEBI" id="CHEBI:77805"/>
        <dbReference type="ChEBI" id="CHEBI:456215"/>
        <dbReference type="EC" id="6.3.2.14"/>
    </reaction>
</comment>
<comment type="catalytic activity">
    <reaction evidence="1">
        <text>isochorismate + H2O = (2S,3S)-2,3-dihydroxy-2,3-dihydrobenzoate + pyruvate</text>
        <dbReference type="Rhea" id="RHEA:11112"/>
        <dbReference type="ChEBI" id="CHEBI:15361"/>
        <dbReference type="ChEBI" id="CHEBI:15377"/>
        <dbReference type="ChEBI" id="CHEBI:29780"/>
        <dbReference type="ChEBI" id="CHEBI:58764"/>
        <dbReference type="EC" id="3.3.2.1"/>
    </reaction>
</comment>
<comment type="cofactor">
    <cofactor evidence="1">
        <name>Mg(2+)</name>
        <dbReference type="ChEBI" id="CHEBI:18420"/>
    </cofactor>
</comment>
<comment type="pathway">
    <text evidence="1">Siderophore biosynthesis; enterobactin biosynthesis.</text>
</comment>
<comment type="subunit">
    <text evidence="1">Proteins EntB, EntD, EntE, and EntF form a multienzyme complex called enterobactin synthase. Homodimer. Also forms a specific pairwise interaction with EntC; this interaction likely facilitates substrate channeling to connect the EntB and EntC active sites.</text>
</comment>
<comment type="subcellular location">
    <subcellularLocation>
        <location evidence="1">Cytoplasm</location>
    </subcellularLocation>
</comment>
<comment type="induction">
    <text evidence="1">Under conditions of iron deficiency and by the fur protein.</text>
</comment>
<comment type="PTM">
    <text evidence="1">4'-phosphopantetheine is transferred from CoA to a specific serine of apo-EntB by EntD. Holo-EntB so formed is then acylated with 2,3-dihydroxybenzoate in a reaction catalyzed by EntE.</text>
</comment>
<comment type="similarity">
    <text evidence="1">In the N-terminal section; belongs to the isochorismatase family.</text>
</comment>
<gene>
    <name evidence="1" type="primary">entB</name>
    <name type="ordered locus">SF0509</name>
    <name type="ordered locus">S0515</name>
</gene>
<accession>P0ADI6</accession>
<accession>P15048</accession>
<protein>
    <recommendedName>
        <fullName evidence="1">Enterobactin synthase component B</fullName>
        <ecNumber evidence="1">6.3.2.14</ecNumber>
    </recommendedName>
    <alternativeName>
        <fullName evidence="1">Enterobactin biosynthesis bifunctional protein EntB</fullName>
    </alternativeName>
    <alternativeName>
        <fullName evidence="1">Enterochelin synthase B</fullName>
    </alternativeName>
    <domain>
        <recommendedName>
            <fullName evidence="1">Isochorismatase</fullName>
            <ecNumber evidence="1">3.3.2.1</ecNumber>
        </recommendedName>
        <alternativeName>
            <fullName evidence="1">2,3-dihydro-2,3-dihydroxybenzoat synthase</fullName>
        </alternativeName>
        <alternativeName>
            <fullName evidence="1">Isochorismate lyase</fullName>
        </alternativeName>
    </domain>
    <domain>
        <recommendedName>
            <fullName evidence="1">Aryl carrier protein</fullName>
            <shortName evidence="1">ArCP</shortName>
        </recommendedName>
    </domain>
</protein>
<evidence type="ECO:0000250" key="1">
    <source>
        <dbReference type="UniProtKB" id="P0ADI4"/>
    </source>
</evidence>
<evidence type="ECO:0000255" key="2">
    <source>
        <dbReference type="PROSITE-ProRule" id="PRU00258"/>
    </source>
</evidence>
<evidence type="ECO:0000305" key="3"/>
<name>ENTB_SHIFL</name>
<proteinExistence type="inferred from homology"/>
<organism>
    <name type="scientific">Shigella flexneri</name>
    <dbReference type="NCBI Taxonomy" id="623"/>
    <lineage>
        <taxon>Bacteria</taxon>
        <taxon>Pseudomonadati</taxon>
        <taxon>Pseudomonadota</taxon>
        <taxon>Gammaproteobacteria</taxon>
        <taxon>Enterobacterales</taxon>
        <taxon>Enterobacteriaceae</taxon>
        <taxon>Shigella</taxon>
    </lineage>
</organism>
<keyword id="KW-0963">Cytoplasm</keyword>
<keyword id="KW-0259">Enterobactin biosynthesis</keyword>
<keyword id="KW-0378">Hydrolase</keyword>
<keyword id="KW-0436">Ligase</keyword>
<keyword id="KW-0460">Magnesium</keyword>
<keyword id="KW-0479">Metal-binding</keyword>
<keyword id="KW-0511">Multifunctional enzyme</keyword>
<keyword id="KW-0596">Phosphopantetheine</keyword>
<keyword id="KW-0597">Phosphoprotein</keyword>
<keyword id="KW-1185">Reference proteome</keyword>
<dbReference type="EC" id="6.3.2.14" evidence="1"/>
<dbReference type="EC" id="3.3.2.1" evidence="1"/>
<dbReference type="EMBL" id="AE005674">
    <property type="protein sequence ID" value="AAN42157.1"/>
    <property type="molecule type" value="Genomic_DNA"/>
</dbReference>
<dbReference type="EMBL" id="AE014073">
    <property type="protein sequence ID" value="AAP16029.1"/>
    <property type="molecule type" value="Genomic_DNA"/>
</dbReference>
<dbReference type="RefSeq" id="NP_706450.1">
    <property type="nucleotide sequence ID" value="NC_004337.2"/>
</dbReference>
<dbReference type="RefSeq" id="WP_001007138.1">
    <property type="nucleotide sequence ID" value="NZ_WPGW01000083.1"/>
</dbReference>
<dbReference type="SMR" id="P0ADI6"/>
<dbReference type="STRING" id="198214.SF0509"/>
<dbReference type="PaxDb" id="198214-SF0509"/>
<dbReference type="GeneID" id="1027539"/>
<dbReference type="KEGG" id="sfl:SF0509"/>
<dbReference type="KEGG" id="sfx:S0515"/>
<dbReference type="PATRIC" id="fig|198214.7.peg.592"/>
<dbReference type="HOGENOM" id="CLU_068979_2_0_6"/>
<dbReference type="UniPathway" id="UPA00017"/>
<dbReference type="Proteomes" id="UP000001006">
    <property type="component" value="Chromosome"/>
</dbReference>
<dbReference type="Proteomes" id="UP000002673">
    <property type="component" value="Chromosome"/>
</dbReference>
<dbReference type="GO" id="GO:0005737">
    <property type="term" value="C:cytoplasm"/>
    <property type="evidence" value="ECO:0007669"/>
    <property type="project" value="UniProtKB-SubCell"/>
</dbReference>
<dbReference type="GO" id="GO:0047527">
    <property type="term" value="F:2,3-dihydroxybenzoate-serine ligase activity"/>
    <property type="evidence" value="ECO:0000250"/>
    <property type="project" value="UniProtKB"/>
</dbReference>
<dbReference type="GO" id="GO:0008908">
    <property type="term" value="F:isochorismatase activity"/>
    <property type="evidence" value="ECO:0000250"/>
    <property type="project" value="UniProtKB"/>
</dbReference>
<dbReference type="GO" id="GO:0000287">
    <property type="term" value="F:magnesium ion binding"/>
    <property type="evidence" value="ECO:0000250"/>
    <property type="project" value="UniProtKB"/>
</dbReference>
<dbReference type="GO" id="GO:0009239">
    <property type="term" value="P:enterobactin biosynthetic process"/>
    <property type="evidence" value="ECO:0000250"/>
    <property type="project" value="UniProtKB"/>
</dbReference>
<dbReference type="CDD" id="cd01013">
    <property type="entry name" value="isochorismatase"/>
    <property type="match status" value="1"/>
</dbReference>
<dbReference type="FunFam" id="1.10.1200.10:FF:000009">
    <property type="entry name" value="Isochorismatase"/>
    <property type="match status" value="1"/>
</dbReference>
<dbReference type="FunFam" id="3.40.50.850:FF:000002">
    <property type="entry name" value="Vibriobactin-specific isochorismatase"/>
    <property type="match status" value="1"/>
</dbReference>
<dbReference type="Gene3D" id="1.10.1200.10">
    <property type="entry name" value="ACP-like"/>
    <property type="match status" value="1"/>
</dbReference>
<dbReference type="Gene3D" id="3.40.50.850">
    <property type="entry name" value="Isochorismatase-like"/>
    <property type="match status" value="1"/>
</dbReference>
<dbReference type="InterPro" id="IPR036736">
    <property type="entry name" value="ACP-like_sf"/>
</dbReference>
<dbReference type="InterPro" id="IPR016291">
    <property type="entry name" value="Isochorismatase"/>
</dbReference>
<dbReference type="InterPro" id="IPR000868">
    <property type="entry name" value="Isochorismatase-like_dom"/>
</dbReference>
<dbReference type="InterPro" id="IPR050272">
    <property type="entry name" value="Isochorismatase-like_hydrls"/>
</dbReference>
<dbReference type="InterPro" id="IPR036380">
    <property type="entry name" value="Isochorismatase-like_sf"/>
</dbReference>
<dbReference type="InterPro" id="IPR009081">
    <property type="entry name" value="PP-bd_ACP"/>
</dbReference>
<dbReference type="PANTHER" id="PTHR43540:SF3">
    <property type="entry name" value="ENTEROBACTIN SYNTHASE COMPONENT B"/>
    <property type="match status" value="1"/>
</dbReference>
<dbReference type="PANTHER" id="PTHR43540">
    <property type="entry name" value="PEROXYUREIDOACRYLATE/UREIDOACRYLATE AMIDOHYDROLASE-RELATED"/>
    <property type="match status" value="1"/>
</dbReference>
<dbReference type="Pfam" id="PF00857">
    <property type="entry name" value="Isochorismatase"/>
    <property type="match status" value="1"/>
</dbReference>
<dbReference type="Pfam" id="PF00550">
    <property type="entry name" value="PP-binding"/>
    <property type="match status" value="1"/>
</dbReference>
<dbReference type="PIRSF" id="PIRSF001111">
    <property type="entry name" value="Isochorismatase"/>
    <property type="match status" value="1"/>
</dbReference>
<dbReference type="PRINTS" id="PR01398">
    <property type="entry name" value="ISCHRISMTASE"/>
</dbReference>
<dbReference type="SUPFAM" id="SSF47336">
    <property type="entry name" value="ACP-like"/>
    <property type="match status" value="1"/>
</dbReference>
<dbReference type="SUPFAM" id="SSF52499">
    <property type="entry name" value="Isochorismatase-like hydrolases"/>
    <property type="match status" value="1"/>
</dbReference>
<dbReference type="PROSITE" id="PS50075">
    <property type="entry name" value="CARRIER"/>
    <property type="match status" value="1"/>
</dbReference>
<feature type="initiator methionine" description="Removed" evidence="1">
    <location>
        <position position="1"/>
    </location>
</feature>
<feature type="chain" id="PRO_0000201824" description="Enterobactin synthase component B">
    <location>
        <begin position="2"/>
        <end position="285"/>
    </location>
</feature>
<feature type="domain" description="Carrier" evidence="2">
    <location>
        <begin position="209"/>
        <end position="284"/>
    </location>
</feature>
<feature type="region of interest" description="Isochorismatase" evidence="1">
    <location>
        <begin position="2"/>
        <end position="213"/>
    </location>
</feature>
<feature type="binding site" evidence="1">
    <location>
        <position position="227"/>
    </location>
    <ligand>
        <name>Mg(2+)</name>
        <dbReference type="ChEBI" id="CHEBI:18420"/>
    </ligand>
</feature>
<feature type="binding site" evidence="1">
    <location>
        <position position="242"/>
    </location>
    <ligand>
        <name>Mg(2+)</name>
        <dbReference type="ChEBI" id="CHEBI:18420"/>
    </ligand>
</feature>
<feature type="binding site" evidence="1">
    <location>
        <position position="244"/>
    </location>
    <ligand>
        <name>Mg(2+)</name>
        <dbReference type="ChEBI" id="CHEBI:18420"/>
    </ligand>
</feature>
<feature type="modified residue" description="O-(pantetheine 4'-phosphoryl)serine" evidence="2">
    <location>
        <position position="245"/>
    </location>
</feature>
<feature type="sequence conflict" description="In Ref. 2; AAP16029." evidence="3" ref="2">
    <original>P</original>
    <variation>L</variation>
    <location>
        <position position="28"/>
    </location>
</feature>
<sequence length="285" mass="32554">MAIPKLQAYALPESHDIPQNKVDWAFEPQRAALLIHDMQDYFVSFWGENCPMMEQVIANIAALRDYCKQHNIPVYYTAQPKEQSDEDRALLNDMWGPGLTRSPEQQKVVDRLTPDADDTVLVKWRYSAFHRSPLEQMLKESGRNQLIITGVYAHIGCMTTATDAFMRDIKPFMVADALADFSRDEHLMSLKYVAGRSGRVVMTEELLPAPIPASKAALREVILPLLDESDEPFDDDNLIDYGLDSVRMMALAARWRKVHGDIDFVMLAKNPTIDAWWKLLSREVK</sequence>